<organism>
    <name type="scientific">Pseudomonas putida</name>
    <name type="common">Arthrobacter siderocapsulatus</name>
    <dbReference type="NCBI Taxonomy" id="303"/>
    <lineage>
        <taxon>Bacteria</taxon>
        <taxon>Pseudomonadati</taxon>
        <taxon>Pseudomonadota</taxon>
        <taxon>Gammaproteobacteria</taxon>
        <taxon>Pseudomonadales</taxon>
        <taxon>Pseudomonadaceae</taxon>
        <taxon>Pseudomonas</taxon>
    </lineage>
</organism>
<name>CLSA_PSEPU</name>
<comment type="function">
    <text evidence="1">Catalyzes the reversible phosphatidyl group transfer from one phosphatidylglycerol molecule to another to form cardiolipin (CL) (diphosphatidylglycerol) and glycerol.</text>
</comment>
<comment type="catalytic activity">
    <reaction evidence="1">
        <text>2 a 1,2-diacyl-sn-glycero-3-phospho-(1'-sn-glycerol) = a cardiolipin + glycerol</text>
        <dbReference type="Rhea" id="RHEA:31451"/>
        <dbReference type="ChEBI" id="CHEBI:17754"/>
        <dbReference type="ChEBI" id="CHEBI:62237"/>
        <dbReference type="ChEBI" id="CHEBI:64716"/>
    </reaction>
</comment>
<comment type="subcellular location">
    <subcellularLocation>
        <location evidence="1">Cell inner membrane</location>
        <topology evidence="1">Multi-pass membrane protein</topology>
    </subcellularLocation>
</comment>
<comment type="similarity">
    <text evidence="1">Belongs to the phospholipase D family. Cardiolipin synthase subfamily. ClsA sub-subfamily.</text>
</comment>
<sequence length="481" mass="54329">MHMDYHSPYFFGYLLGLIHLLGVVAALHALFTVRTAQGAIAWAMPLFFIPYLTLIPYLIFGARSFYAYIKARRQANQEMHVAMANLNWRPWVEEALTARESESYAALRAMPKLGRMPCLANNQVKLLVNGKATFDAIFAAIEKARDVVLVQFFIIHDDTLGKALQQLLLRKAAEGVQVFVLYDRVGSHALPASYSQQLRNGGVQIHAFATRRGWFNRFQVNFRNHRKIVVVDGLLGFIGGHNVGDEYLGGHPQLSPWRDTHVQISGPVLACLQESFAEDWYWATRQLPPLILPDAYPDNGVLCQALASGPADPQETCSLFFLEAIHSATRRVWITSPYFIPDEAVFAALRLAVLRGVDVRVLIPSRPDHRIVYAASSLFAFEAVRAGVRMFRYQPGFLHQKVVLVDDEVSAIGSANLDNRSFRLNFEITLLTVDRNFADQVEHMLIKDFEQAREITAEDSRDTHRLQQLGMRIARLISPIL</sequence>
<feature type="chain" id="PRO_0000201261" description="Cardiolipin synthase A">
    <location>
        <begin position="1"/>
        <end position="481"/>
    </location>
</feature>
<feature type="transmembrane region" description="Helical" evidence="1">
    <location>
        <begin position="10"/>
        <end position="30"/>
    </location>
</feature>
<feature type="transmembrane region" description="Helical" evidence="1">
    <location>
        <begin position="40"/>
        <end position="60"/>
    </location>
</feature>
<feature type="domain" description="PLD phosphodiesterase 1" evidence="1">
    <location>
        <begin position="220"/>
        <end position="247"/>
    </location>
</feature>
<feature type="domain" description="PLD phosphodiesterase 2" evidence="1">
    <location>
        <begin position="394"/>
        <end position="421"/>
    </location>
</feature>
<feature type="active site" evidence="1">
    <location>
        <position position="225"/>
    </location>
</feature>
<feature type="active site" evidence="1">
    <location>
        <position position="227"/>
    </location>
</feature>
<feature type="active site" evidence="1">
    <location>
        <position position="232"/>
    </location>
</feature>
<feature type="active site" evidence="1">
    <location>
        <position position="399"/>
    </location>
</feature>
<feature type="active site" evidence="1">
    <location>
        <position position="401"/>
    </location>
</feature>
<feature type="active site" evidence="1">
    <location>
        <position position="406"/>
    </location>
</feature>
<proteinExistence type="inferred from homology"/>
<protein>
    <recommendedName>
        <fullName evidence="1">Cardiolipin synthase A</fullName>
        <shortName evidence="1">CL synthase</shortName>
        <ecNumber evidence="1">2.7.8.-</ecNumber>
    </recommendedName>
</protein>
<accession>P31048</accession>
<gene>
    <name evidence="1" type="primary">clsA</name>
    <name type="synonym">cls</name>
</gene>
<keyword id="KW-0997">Cell inner membrane</keyword>
<keyword id="KW-1003">Cell membrane</keyword>
<keyword id="KW-0444">Lipid biosynthesis</keyword>
<keyword id="KW-0443">Lipid metabolism</keyword>
<keyword id="KW-0472">Membrane</keyword>
<keyword id="KW-0594">Phospholipid biosynthesis</keyword>
<keyword id="KW-1208">Phospholipid metabolism</keyword>
<keyword id="KW-0677">Repeat</keyword>
<keyword id="KW-0808">Transferase</keyword>
<keyword id="KW-0812">Transmembrane</keyword>
<keyword id="KW-1133">Transmembrane helix</keyword>
<evidence type="ECO:0000255" key="1">
    <source>
        <dbReference type="HAMAP-Rule" id="MF_00190"/>
    </source>
</evidence>
<reference key="1">
    <citation type="submission" date="1992-08" db="EMBL/GenBank/DDBJ databases">
        <authorList>
            <person name="Lorenz D."/>
            <person name="Sokatch J.R."/>
        </authorList>
    </citation>
    <scope>NUCLEOTIDE SEQUENCE [GENOMIC DNA]</scope>
    <source>
        <strain>G2</strain>
    </source>
</reference>
<dbReference type="EC" id="2.7.8.-" evidence="1"/>
<dbReference type="EMBL" id="X55704">
    <property type="protein sequence ID" value="CAA39233.1"/>
    <property type="molecule type" value="Genomic_DNA"/>
</dbReference>
<dbReference type="SMR" id="P31048"/>
<dbReference type="eggNOG" id="COG1502">
    <property type="taxonomic scope" value="Bacteria"/>
</dbReference>
<dbReference type="GO" id="GO:0005886">
    <property type="term" value="C:plasma membrane"/>
    <property type="evidence" value="ECO:0007669"/>
    <property type="project" value="UniProtKB-SubCell"/>
</dbReference>
<dbReference type="GO" id="GO:0008808">
    <property type="term" value="F:cardiolipin synthase activity"/>
    <property type="evidence" value="ECO:0007669"/>
    <property type="project" value="InterPro"/>
</dbReference>
<dbReference type="GO" id="GO:0032049">
    <property type="term" value="P:cardiolipin biosynthetic process"/>
    <property type="evidence" value="ECO:0007669"/>
    <property type="project" value="InterPro"/>
</dbReference>
<dbReference type="CDD" id="cd09155">
    <property type="entry name" value="PLDc_PaCLS_like_1"/>
    <property type="match status" value="1"/>
</dbReference>
<dbReference type="CDD" id="cd09161">
    <property type="entry name" value="PLDc_PaCLS_like_2"/>
    <property type="match status" value="1"/>
</dbReference>
<dbReference type="FunFam" id="3.30.870.10:FF:000014">
    <property type="entry name" value="Cardiolipin synthase"/>
    <property type="match status" value="1"/>
</dbReference>
<dbReference type="FunFam" id="3.30.870.10:FF:000021">
    <property type="entry name" value="Cardiolipin synthase"/>
    <property type="match status" value="1"/>
</dbReference>
<dbReference type="Gene3D" id="3.30.870.10">
    <property type="entry name" value="Endonuclease Chain A"/>
    <property type="match status" value="2"/>
</dbReference>
<dbReference type="HAMAP" id="MF_00190">
    <property type="entry name" value="Cardiolipin_synth_ClsA"/>
    <property type="match status" value="1"/>
</dbReference>
<dbReference type="InterPro" id="IPR022924">
    <property type="entry name" value="Cardiolipin_synthase"/>
</dbReference>
<dbReference type="InterPro" id="IPR030840">
    <property type="entry name" value="CL_synthase_A"/>
</dbReference>
<dbReference type="InterPro" id="IPR027379">
    <property type="entry name" value="CLS_N"/>
</dbReference>
<dbReference type="InterPro" id="IPR025202">
    <property type="entry name" value="PLD-like_dom"/>
</dbReference>
<dbReference type="InterPro" id="IPR001736">
    <property type="entry name" value="PLipase_D/transphosphatidylase"/>
</dbReference>
<dbReference type="NCBIfam" id="TIGR04265">
    <property type="entry name" value="bac_cardiolipin"/>
    <property type="match status" value="1"/>
</dbReference>
<dbReference type="PANTHER" id="PTHR21248">
    <property type="entry name" value="CARDIOLIPIN SYNTHASE"/>
    <property type="match status" value="1"/>
</dbReference>
<dbReference type="PANTHER" id="PTHR21248:SF22">
    <property type="entry name" value="PHOSPHOLIPASE D"/>
    <property type="match status" value="1"/>
</dbReference>
<dbReference type="Pfam" id="PF13091">
    <property type="entry name" value="PLDc_2"/>
    <property type="match status" value="2"/>
</dbReference>
<dbReference type="Pfam" id="PF13396">
    <property type="entry name" value="PLDc_N"/>
    <property type="match status" value="1"/>
</dbReference>
<dbReference type="SMART" id="SM00155">
    <property type="entry name" value="PLDc"/>
    <property type="match status" value="2"/>
</dbReference>
<dbReference type="SUPFAM" id="SSF56024">
    <property type="entry name" value="Phospholipase D/nuclease"/>
    <property type="match status" value="2"/>
</dbReference>
<dbReference type="PROSITE" id="PS50035">
    <property type="entry name" value="PLD"/>
    <property type="match status" value="2"/>
</dbReference>